<gene>
    <name type="primary">epha4a</name>
    <name type="synonym">ek2</name>
    <name type="synonym">zek2</name>
</gene>
<reference key="1">
    <citation type="journal article" date="1997" name="Dev. Dyn.">
        <title>Novel Eph-family receptor tyrosine kinase is widely expressed in the developing zebrafish nervous system.</title>
        <authorList>
            <person name="Bovenkamp D.E."/>
            <person name="Greer P."/>
        </authorList>
    </citation>
    <scope>NUCLEOTIDE SEQUENCE [MRNA]</scope>
    <scope>TISSUE SPECIFICITY</scope>
</reference>
<accession>O13148</accession>
<evidence type="ECO:0000250" key="1">
    <source>
        <dbReference type="UniProtKB" id="Q03137"/>
    </source>
</evidence>
<evidence type="ECO:0000255" key="2"/>
<evidence type="ECO:0000255" key="3">
    <source>
        <dbReference type="PROSITE-ProRule" id="PRU00159"/>
    </source>
</evidence>
<evidence type="ECO:0000255" key="4">
    <source>
        <dbReference type="PROSITE-ProRule" id="PRU10028"/>
    </source>
</evidence>
<evidence type="ECO:0000269" key="5">
    <source>
    </source>
</evidence>
<keyword id="KW-0067">ATP-binding</keyword>
<keyword id="KW-1003">Cell membrane</keyword>
<keyword id="KW-0967">Endosome</keyword>
<keyword id="KW-0418">Kinase</keyword>
<keyword id="KW-0472">Membrane</keyword>
<keyword id="KW-0547">Nucleotide-binding</keyword>
<keyword id="KW-0597">Phosphoprotein</keyword>
<keyword id="KW-0675">Receptor</keyword>
<keyword id="KW-1185">Reference proteome</keyword>
<keyword id="KW-0808">Transferase</keyword>
<keyword id="KW-0829">Tyrosine-protein kinase</keyword>
<organism>
    <name type="scientific">Danio rerio</name>
    <name type="common">Zebrafish</name>
    <name type="synonym">Brachydanio rerio</name>
    <dbReference type="NCBI Taxonomy" id="7955"/>
    <lineage>
        <taxon>Eukaryota</taxon>
        <taxon>Metazoa</taxon>
        <taxon>Chordata</taxon>
        <taxon>Craniata</taxon>
        <taxon>Vertebrata</taxon>
        <taxon>Euteleostomi</taxon>
        <taxon>Actinopterygii</taxon>
        <taxon>Neopterygii</taxon>
        <taxon>Teleostei</taxon>
        <taxon>Ostariophysi</taxon>
        <taxon>Cypriniformes</taxon>
        <taxon>Danionidae</taxon>
        <taxon>Danioninae</taxon>
        <taxon>Danio</taxon>
    </lineage>
</organism>
<name>EPA4A_DANRE</name>
<comment type="function">
    <text evidence="1">Receptor tyrosine kinase which binds membrane-bound ephrin family ligands residing on adjacent cells, leading to contact-dependent bidirectional signaling into neighboring cells. The signaling pathway downstream of the receptor is referred to as forward signaling while the signaling pathway downstream of the ephrin ligand is referred to as reverse signaling. Highly promiscuous, it has the unique property among Eph receptors to bind and to be physiologically activated by both GPI-anchored ephrin-A and transmembrane ephrin-B ligands including efna1 and efnb3. Upon activation by ephrin ligands, modulates cell morphology and integrin-dependent cell adhesion through regulation of the Rac, Rap and Rho GTPases activity. Plays an important role in the development of the nervous system controlling different steps of axonal guidance including the establishment of the corticospinal projections (By similarity).</text>
</comment>
<comment type="catalytic activity">
    <reaction evidence="4">
        <text>L-tyrosyl-[protein] + ATP = O-phospho-L-tyrosyl-[protein] + ADP + H(+)</text>
        <dbReference type="Rhea" id="RHEA:10596"/>
        <dbReference type="Rhea" id="RHEA-COMP:10136"/>
        <dbReference type="Rhea" id="RHEA-COMP:20101"/>
        <dbReference type="ChEBI" id="CHEBI:15378"/>
        <dbReference type="ChEBI" id="CHEBI:30616"/>
        <dbReference type="ChEBI" id="CHEBI:46858"/>
        <dbReference type="ChEBI" id="CHEBI:61978"/>
        <dbReference type="ChEBI" id="CHEBI:456216"/>
        <dbReference type="EC" id="2.7.10.1"/>
    </reaction>
</comment>
<comment type="subcellular location">
    <subcellularLocation>
        <location evidence="1">Cell membrane</location>
        <topology evidence="1">Single-pass type I membrane protein</topology>
    </subcellularLocation>
    <subcellularLocation>
        <location evidence="1">Early endosome</location>
    </subcellularLocation>
    <text evidence="1">Clustered upon activation and targeted to early endosome.</text>
</comment>
<comment type="tissue specificity">
    <text evidence="5">Widely expressed in the developing nervous system.</text>
</comment>
<comment type="similarity">
    <text evidence="3">Belongs to the protein kinase superfamily. Tyr protein kinase family. Ephrin receptor subfamily.</text>
</comment>
<dbReference type="EC" id="2.7.10.1"/>
<dbReference type="EMBL" id="U89380">
    <property type="protein sequence ID" value="AAC60222.1"/>
    <property type="molecule type" value="mRNA"/>
</dbReference>
<dbReference type="SMR" id="O13148"/>
<dbReference type="FunCoup" id="O13148">
    <property type="interactions" value="1"/>
</dbReference>
<dbReference type="STRING" id="7955.ENSDARP00000123962"/>
<dbReference type="PaxDb" id="7955-ENSDARP00000123962"/>
<dbReference type="PeptideAtlas" id="O13148"/>
<dbReference type="AGR" id="ZFIN:ZDB-GENE-001207-7"/>
<dbReference type="ZFIN" id="ZDB-GENE-001207-7">
    <property type="gene designation" value="epha4a"/>
</dbReference>
<dbReference type="eggNOG" id="KOG0196">
    <property type="taxonomic scope" value="Eukaryota"/>
</dbReference>
<dbReference type="InParanoid" id="O13148"/>
<dbReference type="Reactome" id="R-DRE-2682334">
    <property type="pathway name" value="EPH-Ephrin signaling"/>
</dbReference>
<dbReference type="Reactome" id="R-DRE-3928663">
    <property type="pathway name" value="EPHA-mediated growth cone collapse"/>
</dbReference>
<dbReference type="Reactome" id="R-DRE-3928665">
    <property type="pathway name" value="EPH-ephrin mediated repulsion of cells"/>
</dbReference>
<dbReference type="SignaLink" id="O13148"/>
<dbReference type="Proteomes" id="UP000000437">
    <property type="component" value="Unplaced"/>
</dbReference>
<dbReference type="GO" id="GO:0005769">
    <property type="term" value="C:early endosome"/>
    <property type="evidence" value="ECO:0007669"/>
    <property type="project" value="UniProtKB-SubCell"/>
</dbReference>
<dbReference type="GO" id="GO:0005886">
    <property type="term" value="C:plasma membrane"/>
    <property type="evidence" value="ECO:0000318"/>
    <property type="project" value="GO_Central"/>
</dbReference>
<dbReference type="GO" id="GO:0043235">
    <property type="term" value="C:receptor complex"/>
    <property type="evidence" value="ECO:0000318"/>
    <property type="project" value="GO_Central"/>
</dbReference>
<dbReference type="GO" id="GO:0005524">
    <property type="term" value="F:ATP binding"/>
    <property type="evidence" value="ECO:0007669"/>
    <property type="project" value="UniProtKB-KW"/>
</dbReference>
<dbReference type="GO" id="GO:0004714">
    <property type="term" value="F:transmembrane receptor protein tyrosine kinase activity"/>
    <property type="evidence" value="ECO:0000318"/>
    <property type="project" value="GO_Central"/>
</dbReference>
<dbReference type="GO" id="GO:0009952">
    <property type="term" value="P:anterior/posterior pattern specification"/>
    <property type="evidence" value="ECO:0000315"/>
    <property type="project" value="ZFIN"/>
</dbReference>
<dbReference type="GO" id="GO:0007169">
    <property type="term" value="P:cell surface receptor protein tyrosine kinase signaling pathway"/>
    <property type="evidence" value="ECO:0000318"/>
    <property type="project" value="GO_Central"/>
</dbReference>
<dbReference type="GO" id="GO:0009988">
    <property type="term" value="P:cell-cell recognition"/>
    <property type="evidence" value="ECO:0000315"/>
    <property type="project" value="ZFIN"/>
</dbReference>
<dbReference type="GO" id="GO:0030900">
    <property type="term" value="P:forebrain development"/>
    <property type="evidence" value="ECO:0000315"/>
    <property type="project" value="ZFIN"/>
</dbReference>
<dbReference type="GO" id="GO:0030517">
    <property type="term" value="P:negative regulation of axon extension"/>
    <property type="evidence" value="ECO:0000316"/>
    <property type="project" value="ZFIN"/>
</dbReference>
<dbReference type="GO" id="GO:0048685">
    <property type="term" value="P:negative regulation of collateral sprouting of intact axon in response to injury"/>
    <property type="evidence" value="ECO:0000316"/>
    <property type="project" value="ZFIN"/>
</dbReference>
<dbReference type="GO" id="GO:0003404">
    <property type="term" value="P:optic vesicle morphogenesis"/>
    <property type="evidence" value="ECO:0000316"/>
    <property type="project" value="ZFIN"/>
</dbReference>
<dbReference type="GO" id="GO:0031641">
    <property type="term" value="P:regulation of myelination"/>
    <property type="evidence" value="ECO:0000315"/>
    <property type="project" value="ZFIN"/>
</dbReference>
<dbReference type="GO" id="GO:0021654">
    <property type="term" value="P:rhombomere boundary formation"/>
    <property type="evidence" value="ECO:0000315"/>
    <property type="project" value="ZFIN"/>
</dbReference>
<dbReference type="GO" id="GO:0061053">
    <property type="term" value="P:somite development"/>
    <property type="evidence" value="ECO:0000316"/>
    <property type="project" value="ZFIN"/>
</dbReference>
<dbReference type="FunFam" id="1.10.510.10:FF:000019">
    <property type="entry name" value="Ephrin type-A receptor 5"/>
    <property type="match status" value="1"/>
</dbReference>
<dbReference type="Gene3D" id="3.30.200.20">
    <property type="entry name" value="Phosphorylase Kinase, domain 1"/>
    <property type="match status" value="1"/>
</dbReference>
<dbReference type="Gene3D" id="1.10.510.10">
    <property type="entry name" value="Transferase(Phosphotransferase) domain 1"/>
    <property type="match status" value="1"/>
</dbReference>
<dbReference type="InterPro" id="IPR050449">
    <property type="entry name" value="Ephrin_rcpt_TKs"/>
</dbReference>
<dbReference type="InterPro" id="IPR011009">
    <property type="entry name" value="Kinase-like_dom_sf"/>
</dbReference>
<dbReference type="InterPro" id="IPR000719">
    <property type="entry name" value="Prot_kinase_dom"/>
</dbReference>
<dbReference type="InterPro" id="IPR017441">
    <property type="entry name" value="Protein_kinase_ATP_BS"/>
</dbReference>
<dbReference type="InterPro" id="IPR001245">
    <property type="entry name" value="Ser-Thr/Tyr_kinase_cat_dom"/>
</dbReference>
<dbReference type="InterPro" id="IPR008266">
    <property type="entry name" value="Tyr_kinase_AS"/>
</dbReference>
<dbReference type="InterPro" id="IPR020635">
    <property type="entry name" value="Tyr_kinase_cat_dom"/>
</dbReference>
<dbReference type="PANTHER" id="PTHR46877">
    <property type="entry name" value="EPH RECEPTOR A5"/>
    <property type="match status" value="1"/>
</dbReference>
<dbReference type="PANTHER" id="PTHR46877:SF18">
    <property type="entry name" value="EPHRIN TYPE-A RECEPTOR 4"/>
    <property type="match status" value="1"/>
</dbReference>
<dbReference type="Pfam" id="PF07714">
    <property type="entry name" value="PK_Tyr_Ser-Thr"/>
    <property type="match status" value="1"/>
</dbReference>
<dbReference type="PIRSF" id="PIRSF000615">
    <property type="entry name" value="TyrPK_CSF1-R"/>
    <property type="match status" value="1"/>
</dbReference>
<dbReference type="PRINTS" id="PR00109">
    <property type="entry name" value="TYRKINASE"/>
</dbReference>
<dbReference type="SMART" id="SM00219">
    <property type="entry name" value="TyrKc"/>
    <property type="match status" value="1"/>
</dbReference>
<dbReference type="SUPFAM" id="SSF56112">
    <property type="entry name" value="Protein kinase-like (PK-like)"/>
    <property type="match status" value="1"/>
</dbReference>
<dbReference type="PROSITE" id="PS00107">
    <property type="entry name" value="PROTEIN_KINASE_ATP"/>
    <property type="match status" value="1"/>
</dbReference>
<dbReference type="PROSITE" id="PS50011">
    <property type="entry name" value="PROTEIN_KINASE_DOM"/>
    <property type="match status" value="1"/>
</dbReference>
<dbReference type="PROSITE" id="PS00109">
    <property type="entry name" value="PROTEIN_KINASE_TYR"/>
    <property type="match status" value="1"/>
</dbReference>
<protein>
    <recommendedName>
        <fullName>Ephrin type-A receptor 4a</fullName>
        <ecNumber>2.7.10.1</ecNumber>
    </recommendedName>
    <alternativeName>
        <fullName>EPH-like kinase 2</fullName>
    </alternativeName>
    <alternativeName>
        <fullName>Tyrosine-protein kinase receptor ZEK2</fullName>
    </alternativeName>
</protein>
<proteinExistence type="evidence at transcript level"/>
<feature type="chain" id="PRO_0000160272" description="Ephrin type-A receptor 4a">
    <location>
        <begin position="1" status="less than"/>
        <end position="292" status="greater than"/>
    </location>
</feature>
<feature type="domain" description="Protein kinase" evidence="3">
    <location>
        <begin position="1" status="less than"/>
        <end position="265"/>
    </location>
</feature>
<feature type="active site" description="Proton acceptor" evidence="3 4">
    <location>
        <position position="120"/>
    </location>
</feature>
<feature type="binding site" evidence="3">
    <location>
        <begin position="1"/>
        <end position="9"/>
    </location>
    <ligand>
        <name>ATP</name>
        <dbReference type="ChEBI" id="CHEBI:30616"/>
    </ligand>
</feature>
<feature type="binding site" evidence="3">
    <location>
        <position position="27"/>
    </location>
    <ligand>
        <name>ATP</name>
        <dbReference type="ChEBI" id="CHEBI:30616"/>
    </ligand>
</feature>
<feature type="modified residue" description="Phosphotyrosine; by autocatalysis" evidence="2">
    <location>
        <position position="153"/>
    </location>
</feature>
<feature type="non-terminal residue">
    <location>
        <position position="1"/>
    </location>
</feature>
<feature type="non-terminal residue">
    <location>
        <position position="292"/>
    </location>
</feature>
<sequence length="292" mass="33045">IGIGEFGEVCSGRLKMPGKREICVAIKTLKAGYTDKQRRDFLSEASIMGQFDHPNIIRLEGVVTKCKPVMIITEYMENGSLDAFLRKNDGRFTVIQLVGILRGIASGMKYLSDMSYVHRDLAARNILVNSNLVCKVSDFGMSRVLEEDPDAAYTTREITGTYQSQGGKIPIRWTAPEAITYRKFTSASDVWSYGIVMWEVMSYGERPYWDMSNQDVIKAIEEGYRLPPPMDCPVSLHQLMLDCWQKERAERPKFSQIVNMLDKLIRNPNSLKRTGGEIARPNTTLLEPSSPE</sequence>